<evidence type="ECO:0000255" key="1">
    <source>
        <dbReference type="HAMAP-Rule" id="MF_00460"/>
    </source>
</evidence>
<gene>
    <name evidence="1" type="primary">rnfH</name>
    <name type="ordered locus">YPDSF_2594</name>
</gene>
<feature type="chain" id="PRO_1000013599" description="Protein RnfH">
    <location>
        <begin position="1"/>
        <end position="94"/>
    </location>
</feature>
<proteinExistence type="inferred from homology"/>
<comment type="similarity">
    <text evidence="1">Belongs to the UPF0125 (RnfH) family.</text>
</comment>
<dbReference type="EMBL" id="CP000668">
    <property type="protein sequence ID" value="ABP40962.1"/>
    <property type="molecule type" value="Genomic_DNA"/>
</dbReference>
<dbReference type="RefSeq" id="WP_002210716.1">
    <property type="nucleotide sequence ID" value="NZ_CP009715.1"/>
</dbReference>
<dbReference type="SMR" id="A4TNV0"/>
<dbReference type="KEGG" id="ypp:YPDSF_2594"/>
<dbReference type="PATRIC" id="fig|386656.14.peg.4115"/>
<dbReference type="Gene3D" id="3.10.20.280">
    <property type="entry name" value="RnfH-like"/>
    <property type="match status" value="1"/>
</dbReference>
<dbReference type="HAMAP" id="MF_00460">
    <property type="entry name" value="UPF0125_RnfH"/>
    <property type="match status" value="1"/>
</dbReference>
<dbReference type="InterPro" id="IPR016155">
    <property type="entry name" value="Mopterin_synth/thiamin_S_b"/>
</dbReference>
<dbReference type="InterPro" id="IPR005346">
    <property type="entry name" value="RnfH"/>
</dbReference>
<dbReference type="InterPro" id="IPR037021">
    <property type="entry name" value="RnfH_sf"/>
</dbReference>
<dbReference type="NCBIfam" id="NF002490">
    <property type="entry name" value="PRK01777.1"/>
    <property type="match status" value="1"/>
</dbReference>
<dbReference type="PANTHER" id="PTHR37483">
    <property type="entry name" value="UPF0125 PROTEIN RATB"/>
    <property type="match status" value="1"/>
</dbReference>
<dbReference type="PANTHER" id="PTHR37483:SF1">
    <property type="entry name" value="UPF0125 PROTEIN RATB"/>
    <property type="match status" value="1"/>
</dbReference>
<dbReference type="Pfam" id="PF03658">
    <property type="entry name" value="Ub-RnfH"/>
    <property type="match status" value="1"/>
</dbReference>
<dbReference type="SUPFAM" id="SSF54285">
    <property type="entry name" value="MoaD/ThiS"/>
    <property type="match status" value="1"/>
</dbReference>
<name>RNFH_YERPP</name>
<reference key="1">
    <citation type="submission" date="2007-02" db="EMBL/GenBank/DDBJ databases">
        <title>Complete sequence of chromosome of Yersinia pestis Pestoides F.</title>
        <authorList>
            <consortium name="US DOE Joint Genome Institute"/>
            <person name="Copeland A."/>
            <person name="Lucas S."/>
            <person name="Lapidus A."/>
            <person name="Barry K."/>
            <person name="Detter J.C."/>
            <person name="Glavina del Rio T."/>
            <person name="Hammon N."/>
            <person name="Israni S."/>
            <person name="Dalin E."/>
            <person name="Tice H."/>
            <person name="Pitluck S."/>
            <person name="Di Bartolo G."/>
            <person name="Chain P."/>
            <person name="Malfatti S."/>
            <person name="Shin M."/>
            <person name="Vergez L."/>
            <person name="Schmutz J."/>
            <person name="Larimer F."/>
            <person name="Land M."/>
            <person name="Hauser L."/>
            <person name="Worsham P."/>
            <person name="Chu M."/>
            <person name="Bearden S."/>
            <person name="Garcia E."/>
            <person name="Richardson P."/>
        </authorList>
    </citation>
    <scope>NUCLEOTIDE SEQUENCE [LARGE SCALE GENOMIC DNA]</scope>
    <source>
        <strain>Pestoides F</strain>
    </source>
</reference>
<protein>
    <recommendedName>
        <fullName evidence="1">Protein RnfH</fullName>
    </recommendedName>
</protein>
<organism>
    <name type="scientific">Yersinia pestis (strain Pestoides F)</name>
    <dbReference type="NCBI Taxonomy" id="386656"/>
    <lineage>
        <taxon>Bacteria</taxon>
        <taxon>Pseudomonadati</taxon>
        <taxon>Pseudomonadota</taxon>
        <taxon>Gammaproteobacteria</taxon>
        <taxon>Enterobacterales</taxon>
        <taxon>Yersiniaceae</taxon>
        <taxon>Yersinia</taxon>
    </lineage>
</organism>
<sequence length="94" mass="10705">MPDIRVEVVYALSERQYLRTVSLVVGSTVEDAIKASGLLELRPDIDLEKNKVGIYSRPVKLGDKLNDGDRVEIYRPLIADPKELRRQRAEQAKK</sequence>
<accession>A4TNV0</accession>